<dbReference type="EMBL" id="CP000038">
    <property type="protein sequence ID" value="AAZ89238.1"/>
    <property type="molecule type" value="Genomic_DNA"/>
</dbReference>
<dbReference type="RefSeq" id="WP_000028953.1">
    <property type="nucleotide sequence ID" value="NC_007384.1"/>
</dbReference>
<dbReference type="SMR" id="Q3YZ24"/>
<dbReference type="GeneID" id="93774608"/>
<dbReference type="KEGG" id="ssn:SSON_2610"/>
<dbReference type="HOGENOM" id="CLU_069054_5_1_6"/>
<dbReference type="Proteomes" id="UP000002529">
    <property type="component" value="Chromosome"/>
</dbReference>
<dbReference type="GO" id="GO:0005829">
    <property type="term" value="C:cytosol"/>
    <property type="evidence" value="ECO:0007669"/>
    <property type="project" value="TreeGrafter"/>
</dbReference>
<dbReference type="GO" id="GO:0051537">
    <property type="term" value="F:2 iron, 2 sulfur cluster binding"/>
    <property type="evidence" value="ECO:0007669"/>
    <property type="project" value="UniProtKB-ARBA"/>
</dbReference>
<dbReference type="GO" id="GO:0005506">
    <property type="term" value="F:iron ion binding"/>
    <property type="evidence" value="ECO:0007669"/>
    <property type="project" value="UniProtKB-UniRule"/>
</dbReference>
<dbReference type="GO" id="GO:0016226">
    <property type="term" value="P:iron-sulfur cluster assembly"/>
    <property type="evidence" value="ECO:0007669"/>
    <property type="project" value="UniProtKB-UniRule"/>
</dbReference>
<dbReference type="FunFam" id="2.60.300.12:FF:000001">
    <property type="entry name" value="Iron-binding protein IscA"/>
    <property type="match status" value="1"/>
</dbReference>
<dbReference type="Gene3D" id="2.60.300.12">
    <property type="entry name" value="HesB-like domain"/>
    <property type="match status" value="1"/>
</dbReference>
<dbReference type="HAMAP" id="MF_01429">
    <property type="entry name" value="Fe_S_insert_IscA"/>
    <property type="match status" value="1"/>
</dbReference>
<dbReference type="InterPro" id="IPR050322">
    <property type="entry name" value="Fe-S_cluster_asmbl/transfer"/>
</dbReference>
<dbReference type="InterPro" id="IPR000361">
    <property type="entry name" value="FeS_biogenesis"/>
</dbReference>
<dbReference type="InterPro" id="IPR016092">
    <property type="entry name" value="FeS_cluster_insertion"/>
</dbReference>
<dbReference type="InterPro" id="IPR017870">
    <property type="entry name" value="FeS_cluster_insertion_CS"/>
</dbReference>
<dbReference type="InterPro" id="IPR035903">
    <property type="entry name" value="HesB-like_dom_sf"/>
</dbReference>
<dbReference type="InterPro" id="IPR011302">
    <property type="entry name" value="IscA_proteobacteria"/>
</dbReference>
<dbReference type="NCBIfam" id="TIGR00049">
    <property type="entry name" value="iron-sulfur cluster assembly accessory protein"/>
    <property type="match status" value="1"/>
</dbReference>
<dbReference type="NCBIfam" id="TIGR02011">
    <property type="entry name" value="IscA"/>
    <property type="match status" value="1"/>
</dbReference>
<dbReference type="NCBIfam" id="NF007049">
    <property type="entry name" value="PRK09502.1"/>
    <property type="match status" value="1"/>
</dbReference>
<dbReference type="PANTHER" id="PTHR10072:SF41">
    <property type="entry name" value="IRON-SULFUR CLUSTER ASSEMBLY 1 HOMOLOG, MITOCHONDRIAL"/>
    <property type="match status" value="1"/>
</dbReference>
<dbReference type="PANTHER" id="PTHR10072">
    <property type="entry name" value="IRON-SULFUR CLUSTER ASSEMBLY PROTEIN"/>
    <property type="match status" value="1"/>
</dbReference>
<dbReference type="Pfam" id="PF01521">
    <property type="entry name" value="Fe-S_biosyn"/>
    <property type="match status" value="1"/>
</dbReference>
<dbReference type="SUPFAM" id="SSF89360">
    <property type="entry name" value="HesB-like domain"/>
    <property type="match status" value="1"/>
</dbReference>
<dbReference type="PROSITE" id="PS01152">
    <property type="entry name" value="HESB"/>
    <property type="match status" value="1"/>
</dbReference>
<feature type="chain" id="PRO_1000024378" description="Iron-binding protein IscA">
    <location>
        <begin position="1"/>
        <end position="107"/>
    </location>
</feature>
<feature type="binding site" evidence="1">
    <location>
        <position position="35"/>
    </location>
    <ligand>
        <name>Fe cation</name>
        <dbReference type="ChEBI" id="CHEBI:24875"/>
    </ligand>
</feature>
<feature type="binding site" evidence="1">
    <location>
        <position position="99"/>
    </location>
    <ligand>
        <name>Fe cation</name>
        <dbReference type="ChEBI" id="CHEBI:24875"/>
    </ligand>
</feature>
<feature type="binding site" evidence="1">
    <location>
        <position position="101"/>
    </location>
    <ligand>
        <name>Fe cation</name>
        <dbReference type="ChEBI" id="CHEBI:24875"/>
    </ligand>
</feature>
<sequence length="107" mass="11556">MSITLSDSAAARVNTFLANRGKGFGLRLGVRTSGCSGMAYVLEFVDEPTPEDIVFEDKGVKVVVDGKSLQFLDGTQLDFVKEGLNEGFKFTNPNVKDECGCGESFHV</sequence>
<organism>
    <name type="scientific">Shigella sonnei (strain Ss046)</name>
    <dbReference type="NCBI Taxonomy" id="300269"/>
    <lineage>
        <taxon>Bacteria</taxon>
        <taxon>Pseudomonadati</taxon>
        <taxon>Pseudomonadota</taxon>
        <taxon>Gammaproteobacteria</taxon>
        <taxon>Enterobacterales</taxon>
        <taxon>Enterobacteriaceae</taxon>
        <taxon>Shigella</taxon>
    </lineage>
</organism>
<accession>Q3YZ24</accession>
<evidence type="ECO:0000255" key="1">
    <source>
        <dbReference type="HAMAP-Rule" id="MF_01429"/>
    </source>
</evidence>
<comment type="function">
    <text evidence="1">Is able to transfer iron-sulfur clusters to apo-ferredoxin. Multiple cycles of [2Fe2S] cluster formation and transfer are observed, suggesting that IscA acts catalytically. Recruits intracellular free iron so as to provide iron for the assembly of transient iron-sulfur cluster in IscU in the presence of IscS, L-cysteine and the thioredoxin reductase system TrxA/TrxB.</text>
</comment>
<comment type="cofactor">
    <cofactor evidence="1">
        <name>Fe cation</name>
        <dbReference type="ChEBI" id="CHEBI:24875"/>
    </cofactor>
    <text evidence="1">Binds 2 iron ions per dimer. The dimer may bind additional iron ions.</text>
</comment>
<comment type="subunit">
    <text evidence="1">Homodimer; may form tetramers and higher multimers.</text>
</comment>
<comment type="similarity">
    <text evidence="1">Belongs to the HesB/IscA family.</text>
</comment>
<protein>
    <recommendedName>
        <fullName evidence="1">Iron-binding protein IscA</fullName>
    </recommendedName>
    <alternativeName>
        <fullName evidence="1">Iron-sulfur cluster assembly protein</fullName>
    </alternativeName>
</protein>
<proteinExistence type="inferred from homology"/>
<name>ISCA_SHISS</name>
<keyword id="KW-0408">Iron</keyword>
<keyword id="KW-0479">Metal-binding</keyword>
<keyword id="KW-1185">Reference proteome</keyword>
<gene>
    <name evidence="1" type="primary">iscA</name>
    <name type="ordered locus">SSON_2610</name>
</gene>
<reference key="1">
    <citation type="journal article" date="2005" name="Nucleic Acids Res.">
        <title>Genome dynamics and diversity of Shigella species, the etiologic agents of bacillary dysentery.</title>
        <authorList>
            <person name="Yang F."/>
            <person name="Yang J."/>
            <person name="Zhang X."/>
            <person name="Chen L."/>
            <person name="Jiang Y."/>
            <person name="Yan Y."/>
            <person name="Tang X."/>
            <person name="Wang J."/>
            <person name="Xiong Z."/>
            <person name="Dong J."/>
            <person name="Xue Y."/>
            <person name="Zhu Y."/>
            <person name="Xu X."/>
            <person name="Sun L."/>
            <person name="Chen S."/>
            <person name="Nie H."/>
            <person name="Peng J."/>
            <person name="Xu J."/>
            <person name="Wang Y."/>
            <person name="Yuan Z."/>
            <person name="Wen Y."/>
            <person name="Yao Z."/>
            <person name="Shen Y."/>
            <person name="Qiang B."/>
            <person name="Hou Y."/>
            <person name="Yu J."/>
            <person name="Jin Q."/>
        </authorList>
    </citation>
    <scope>NUCLEOTIDE SEQUENCE [LARGE SCALE GENOMIC DNA]</scope>
    <source>
        <strain>Ss046</strain>
    </source>
</reference>